<proteinExistence type="predicted"/>
<protein>
    <recommendedName>
        <fullName>Uncharacterized RING finger protein ZK945.4</fullName>
    </recommendedName>
</protein>
<gene>
    <name type="ORF">ZK945.4</name>
</gene>
<evidence type="ECO:0000255" key="1">
    <source>
        <dbReference type="PROSITE-ProRule" id="PRU00024"/>
    </source>
</evidence>
<evidence type="ECO:0000255" key="2">
    <source>
        <dbReference type="PROSITE-ProRule" id="PRU00175"/>
    </source>
</evidence>
<organism>
    <name type="scientific">Caenorhabditis elegans</name>
    <dbReference type="NCBI Taxonomy" id="6239"/>
    <lineage>
        <taxon>Eukaryota</taxon>
        <taxon>Metazoa</taxon>
        <taxon>Ecdysozoa</taxon>
        <taxon>Nematoda</taxon>
        <taxon>Chromadorea</taxon>
        <taxon>Rhabditida</taxon>
        <taxon>Rhabditina</taxon>
        <taxon>Rhabditomorpha</taxon>
        <taxon>Rhabditoidea</taxon>
        <taxon>Rhabditidae</taxon>
        <taxon>Peloderinae</taxon>
        <taxon>Caenorhabditis</taxon>
    </lineage>
</organism>
<reference key="1">
    <citation type="journal article" date="1998" name="Science">
        <title>Genome sequence of the nematode C. elegans: a platform for investigating biology.</title>
        <authorList>
            <consortium name="The C. elegans sequencing consortium"/>
        </authorList>
    </citation>
    <scope>NUCLEOTIDE SEQUENCE [LARGE SCALE GENOMIC DNA]</scope>
    <source>
        <strain>Bristol N2</strain>
    </source>
</reference>
<feature type="chain" id="PRO_0000056327" description="Uncharacterized RING finger protein ZK945.4">
    <location>
        <begin position="1"/>
        <end position="499"/>
    </location>
</feature>
<feature type="zinc finger region" description="RING-type; degenerate" evidence="2">
    <location>
        <begin position="10"/>
        <end position="57"/>
    </location>
</feature>
<feature type="zinc finger region" description="B box-type; degenerate" evidence="1">
    <location>
        <begin position="101"/>
        <end position="147"/>
    </location>
</feature>
<keyword id="KW-0479">Metal-binding</keyword>
<keyword id="KW-1185">Reference proteome</keyword>
<keyword id="KW-0862">Zinc</keyword>
<keyword id="KW-0863">Zinc-finger</keyword>
<name>YS84_CAEEL</name>
<sequence length="499" mass="58294">MNMLRCFPECGICGQEYSEDEKLLIPRILTECGHTICTGCAGKIKGQSSIIACPFDRIETRIWKKDVTRLKKNFSILEIKQEVKDRKNRVISEKNEKKERNKNGVCDENTNHHASNYCETCDADLCEECWTWIHSISTLAHHEKKMISTPDCQFHPGKSISLVCMRDRCKKRQNRLMCSECFLDKCSDHFEHEHSSLHLELPELRRNICSSLALYHEKEKKILANIGKLREIIATYSYDGEPFFQKKNELLRFRHFEMGEMDQAIKVLENEVVKRVRVLEYKISNQKLDLDWLQKNKDAIVKLSALPNMKLVQRKWELEVTVKRIEKDSAVRRPEFLADCSTCIVHVLSQRPLQIEMIPAFRLEIRECHRNEVRKFIENHSTRISSRSNILRYNCDFLEIIDRTEDLTIYSEGLRLIMIVDLLDGDRDRYFVALEQLEEAVAYEKIIVGLKSYSRGHGEAASNFLTKLADLHNKMPKITVVVNVDRSEDIEKIVNESII</sequence>
<dbReference type="EMBL" id="Z48544">
    <property type="protein sequence ID" value="CAA88438.3"/>
    <property type="molecule type" value="Genomic_DNA"/>
</dbReference>
<dbReference type="PIR" id="A88284">
    <property type="entry name" value="A88284"/>
</dbReference>
<dbReference type="PIR" id="T28121">
    <property type="entry name" value="T28121"/>
</dbReference>
<dbReference type="RefSeq" id="NP_001379073.1">
    <property type="nucleotide sequence ID" value="NM_001393176.1"/>
</dbReference>
<dbReference type="RefSeq" id="NP_496179.3">
    <property type="nucleotide sequence ID" value="NM_063778.4"/>
</dbReference>
<dbReference type="STRING" id="6239.ZK945.4.1"/>
<dbReference type="PaxDb" id="6239-ZK945.4"/>
<dbReference type="EnsemblMetazoa" id="ZK945.4.1">
    <property type="protein sequence ID" value="ZK945.4.1"/>
    <property type="gene ID" value="WBGene00014166"/>
</dbReference>
<dbReference type="GeneID" id="174573"/>
<dbReference type="AGR" id="WB:WBGene00014166"/>
<dbReference type="WormBase" id="ZK945.4">
    <property type="protein sequence ID" value="CE42428"/>
    <property type="gene ID" value="WBGene00014166"/>
</dbReference>
<dbReference type="eggNOG" id="KOG4185">
    <property type="taxonomic scope" value="Eukaryota"/>
</dbReference>
<dbReference type="HOGENOM" id="CLU_546583_0_0_1"/>
<dbReference type="InParanoid" id="Q09623"/>
<dbReference type="OMA" id="GTCDENP"/>
<dbReference type="OrthoDB" id="5775596at2759"/>
<dbReference type="PhylomeDB" id="Q09623"/>
<dbReference type="PRO" id="PR:Q09623"/>
<dbReference type="Proteomes" id="UP000001940">
    <property type="component" value="Chromosome II"/>
</dbReference>
<dbReference type="Bgee" id="WBGene00014166">
    <property type="expression patterns" value="Expressed in germ line (C elegans) and 4 other cell types or tissues"/>
</dbReference>
<dbReference type="GO" id="GO:0008270">
    <property type="term" value="F:zinc ion binding"/>
    <property type="evidence" value="ECO:0007669"/>
    <property type="project" value="UniProtKB-KW"/>
</dbReference>
<dbReference type="CDD" id="cd19773">
    <property type="entry name" value="Bbox2_TRIM23_C-IX_rpt1"/>
    <property type="match status" value="1"/>
</dbReference>
<dbReference type="CDD" id="cd23124">
    <property type="entry name" value="mRING-HC-C3HC3D_arc-1-like"/>
    <property type="match status" value="1"/>
</dbReference>
<dbReference type="Gene3D" id="3.30.40.10">
    <property type="entry name" value="Zinc/RING finger domain, C3HC4 (zinc finger)"/>
    <property type="match status" value="1"/>
</dbReference>
<dbReference type="InterPro" id="IPR052667">
    <property type="entry name" value="E3_ubiquitin-ligase_RING"/>
</dbReference>
<dbReference type="InterPro" id="IPR000315">
    <property type="entry name" value="Znf_B-box"/>
</dbReference>
<dbReference type="InterPro" id="IPR001841">
    <property type="entry name" value="Znf_RING"/>
</dbReference>
<dbReference type="InterPro" id="IPR013083">
    <property type="entry name" value="Znf_RING/FYVE/PHD"/>
</dbReference>
<dbReference type="InterPro" id="IPR017907">
    <property type="entry name" value="Znf_RING_CS"/>
</dbReference>
<dbReference type="PANTHER" id="PTHR47156">
    <property type="entry name" value="PROTEIN CBG20824"/>
    <property type="match status" value="1"/>
</dbReference>
<dbReference type="PANTHER" id="PTHR47156:SF9">
    <property type="entry name" value="PROTEIN CBG26870"/>
    <property type="match status" value="1"/>
</dbReference>
<dbReference type="Pfam" id="PF00643">
    <property type="entry name" value="zf-B_box"/>
    <property type="match status" value="1"/>
</dbReference>
<dbReference type="Pfam" id="PF14634">
    <property type="entry name" value="zf-RING_5"/>
    <property type="match status" value="1"/>
</dbReference>
<dbReference type="SMART" id="SM00184">
    <property type="entry name" value="RING"/>
    <property type="match status" value="1"/>
</dbReference>
<dbReference type="SUPFAM" id="SSF57850">
    <property type="entry name" value="RING/U-box"/>
    <property type="match status" value="1"/>
</dbReference>
<dbReference type="PROSITE" id="PS50119">
    <property type="entry name" value="ZF_BBOX"/>
    <property type="match status" value="1"/>
</dbReference>
<dbReference type="PROSITE" id="PS00518">
    <property type="entry name" value="ZF_RING_1"/>
    <property type="match status" value="1"/>
</dbReference>
<dbReference type="PROSITE" id="PS50089">
    <property type="entry name" value="ZF_RING_2"/>
    <property type="match status" value="1"/>
</dbReference>
<accession>Q09623</accession>
<accession>Q09381</accession>